<proteinExistence type="inferred from homology"/>
<reference key="1">
    <citation type="journal article" date="2001" name="Nature">
        <title>Complete genome sequence of a multiple drug resistant Salmonella enterica serovar Typhi CT18.</title>
        <authorList>
            <person name="Parkhill J."/>
            <person name="Dougan G."/>
            <person name="James K.D."/>
            <person name="Thomson N.R."/>
            <person name="Pickard D."/>
            <person name="Wain J."/>
            <person name="Churcher C.M."/>
            <person name="Mungall K.L."/>
            <person name="Bentley S.D."/>
            <person name="Holden M.T.G."/>
            <person name="Sebaihia M."/>
            <person name="Baker S."/>
            <person name="Basham D."/>
            <person name="Brooks K."/>
            <person name="Chillingworth T."/>
            <person name="Connerton P."/>
            <person name="Cronin A."/>
            <person name="Davis P."/>
            <person name="Davies R.M."/>
            <person name="Dowd L."/>
            <person name="White N."/>
            <person name="Farrar J."/>
            <person name="Feltwell T."/>
            <person name="Hamlin N."/>
            <person name="Haque A."/>
            <person name="Hien T.T."/>
            <person name="Holroyd S."/>
            <person name="Jagels K."/>
            <person name="Krogh A."/>
            <person name="Larsen T.S."/>
            <person name="Leather S."/>
            <person name="Moule S."/>
            <person name="O'Gaora P."/>
            <person name="Parry C."/>
            <person name="Quail M.A."/>
            <person name="Rutherford K.M."/>
            <person name="Simmonds M."/>
            <person name="Skelton J."/>
            <person name="Stevens K."/>
            <person name="Whitehead S."/>
            <person name="Barrell B.G."/>
        </authorList>
    </citation>
    <scope>NUCLEOTIDE SEQUENCE [LARGE SCALE GENOMIC DNA]</scope>
    <source>
        <strain>CT18</strain>
    </source>
</reference>
<reference key="2">
    <citation type="journal article" date="2003" name="J. Bacteriol.">
        <title>Comparative genomics of Salmonella enterica serovar Typhi strains Ty2 and CT18.</title>
        <authorList>
            <person name="Deng W."/>
            <person name="Liou S.-R."/>
            <person name="Plunkett G. III"/>
            <person name="Mayhew G.F."/>
            <person name="Rose D.J."/>
            <person name="Burland V."/>
            <person name="Kodoyianni V."/>
            <person name="Schwartz D.C."/>
            <person name="Blattner F.R."/>
        </authorList>
    </citation>
    <scope>NUCLEOTIDE SEQUENCE [LARGE SCALE GENOMIC DNA]</scope>
    <source>
        <strain>ATCC 700931 / Ty2</strain>
    </source>
</reference>
<gene>
    <name type="primary">qseB</name>
    <name type="ordered locus">STY3354</name>
    <name type="ordered locus">t3098</name>
</gene>
<dbReference type="EMBL" id="AL513382">
    <property type="protein sequence ID" value="CAD03009.1"/>
    <property type="molecule type" value="Genomic_DNA"/>
</dbReference>
<dbReference type="EMBL" id="AE014613">
    <property type="protein sequence ID" value="AAO70642.1"/>
    <property type="molecule type" value="Genomic_DNA"/>
</dbReference>
<dbReference type="RefSeq" id="NP_457570.1">
    <property type="nucleotide sequence ID" value="NC_003198.1"/>
</dbReference>
<dbReference type="RefSeq" id="WP_001221574.1">
    <property type="nucleotide sequence ID" value="NZ_WSUR01000003.1"/>
</dbReference>
<dbReference type="SMR" id="P66796"/>
<dbReference type="STRING" id="220341.gene:17587212"/>
<dbReference type="KEGG" id="stt:t3098"/>
<dbReference type="KEGG" id="sty:STY3354"/>
<dbReference type="PATRIC" id="fig|220341.7.peg.3414"/>
<dbReference type="eggNOG" id="COG0745">
    <property type="taxonomic scope" value="Bacteria"/>
</dbReference>
<dbReference type="HOGENOM" id="CLU_000445_30_1_6"/>
<dbReference type="OMA" id="VWGWDFG"/>
<dbReference type="OrthoDB" id="9802426at2"/>
<dbReference type="PHI-base" id="PHI:6882"/>
<dbReference type="Proteomes" id="UP000000541">
    <property type="component" value="Chromosome"/>
</dbReference>
<dbReference type="Proteomes" id="UP000002670">
    <property type="component" value="Chromosome"/>
</dbReference>
<dbReference type="GO" id="GO:0005829">
    <property type="term" value="C:cytosol"/>
    <property type="evidence" value="ECO:0007669"/>
    <property type="project" value="TreeGrafter"/>
</dbReference>
<dbReference type="GO" id="GO:0032993">
    <property type="term" value="C:protein-DNA complex"/>
    <property type="evidence" value="ECO:0007669"/>
    <property type="project" value="TreeGrafter"/>
</dbReference>
<dbReference type="GO" id="GO:0000156">
    <property type="term" value="F:phosphorelay response regulator activity"/>
    <property type="evidence" value="ECO:0007669"/>
    <property type="project" value="TreeGrafter"/>
</dbReference>
<dbReference type="GO" id="GO:0000976">
    <property type="term" value="F:transcription cis-regulatory region binding"/>
    <property type="evidence" value="ECO:0007669"/>
    <property type="project" value="TreeGrafter"/>
</dbReference>
<dbReference type="GO" id="GO:0006355">
    <property type="term" value="P:regulation of DNA-templated transcription"/>
    <property type="evidence" value="ECO:0007669"/>
    <property type="project" value="InterPro"/>
</dbReference>
<dbReference type="CDD" id="cd17624">
    <property type="entry name" value="REC_OmpR_PmrA-like"/>
    <property type="match status" value="1"/>
</dbReference>
<dbReference type="CDD" id="cd00383">
    <property type="entry name" value="trans_reg_C"/>
    <property type="match status" value="1"/>
</dbReference>
<dbReference type="FunFam" id="3.40.50.2300:FF:000002">
    <property type="entry name" value="DNA-binding response regulator PhoP"/>
    <property type="match status" value="1"/>
</dbReference>
<dbReference type="FunFam" id="1.10.10.10:FF:000005">
    <property type="entry name" value="Two-component system response regulator"/>
    <property type="match status" value="1"/>
</dbReference>
<dbReference type="Gene3D" id="3.40.50.2300">
    <property type="match status" value="1"/>
</dbReference>
<dbReference type="Gene3D" id="6.10.250.690">
    <property type="match status" value="1"/>
</dbReference>
<dbReference type="Gene3D" id="1.10.10.10">
    <property type="entry name" value="Winged helix-like DNA-binding domain superfamily/Winged helix DNA-binding domain"/>
    <property type="match status" value="1"/>
</dbReference>
<dbReference type="InterPro" id="IPR011006">
    <property type="entry name" value="CheY-like_superfamily"/>
</dbReference>
<dbReference type="InterPro" id="IPR001867">
    <property type="entry name" value="OmpR/PhoB-type_DNA-bd"/>
</dbReference>
<dbReference type="InterPro" id="IPR016032">
    <property type="entry name" value="Sig_transdc_resp-reg_C-effctor"/>
</dbReference>
<dbReference type="InterPro" id="IPR001789">
    <property type="entry name" value="Sig_transdc_resp-reg_receiver"/>
</dbReference>
<dbReference type="InterPro" id="IPR039420">
    <property type="entry name" value="WalR-like"/>
</dbReference>
<dbReference type="InterPro" id="IPR036388">
    <property type="entry name" value="WH-like_DNA-bd_sf"/>
</dbReference>
<dbReference type="NCBIfam" id="NF007663">
    <property type="entry name" value="PRK10336.1"/>
    <property type="match status" value="1"/>
</dbReference>
<dbReference type="PANTHER" id="PTHR48111">
    <property type="entry name" value="REGULATOR OF RPOS"/>
    <property type="match status" value="1"/>
</dbReference>
<dbReference type="PANTHER" id="PTHR48111:SF35">
    <property type="entry name" value="TRANSCRIPTIONAL REGULATORY PROTEIN QSEB"/>
    <property type="match status" value="1"/>
</dbReference>
<dbReference type="Pfam" id="PF00072">
    <property type="entry name" value="Response_reg"/>
    <property type="match status" value="1"/>
</dbReference>
<dbReference type="Pfam" id="PF00486">
    <property type="entry name" value="Trans_reg_C"/>
    <property type="match status" value="1"/>
</dbReference>
<dbReference type="SMART" id="SM00448">
    <property type="entry name" value="REC"/>
    <property type="match status" value="1"/>
</dbReference>
<dbReference type="SMART" id="SM00862">
    <property type="entry name" value="Trans_reg_C"/>
    <property type="match status" value="1"/>
</dbReference>
<dbReference type="SUPFAM" id="SSF46894">
    <property type="entry name" value="C-terminal effector domain of the bipartite response regulators"/>
    <property type="match status" value="1"/>
</dbReference>
<dbReference type="SUPFAM" id="SSF52172">
    <property type="entry name" value="CheY-like"/>
    <property type="match status" value="1"/>
</dbReference>
<dbReference type="PROSITE" id="PS51755">
    <property type="entry name" value="OMPR_PHOB"/>
    <property type="match status" value="1"/>
</dbReference>
<dbReference type="PROSITE" id="PS50110">
    <property type="entry name" value="RESPONSE_REGULATORY"/>
    <property type="match status" value="1"/>
</dbReference>
<comment type="function">
    <text evidence="1">Member of a two-component regulatory system QseB/QseC. Activates the flagella regulon by activating transcription of flhDC (By similarity).</text>
</comment>
<comment type="subcellular location">
    <subcellularLocation>
        <location evidence="4">Cytoplasm</location>
    </subcellularLocation>
</comment>
<comment type="PTM">
    <text evidence="4">Phosphorylated by QseC.</text>
</comment>
<evidence type="ECO:0000250" key="1"/>
<evidence type="ECO:0000255" key="2">
    <source>
        <dbReference type="PROSITE-ProRule" id="PRU00169"/>
    </source>
</evidence>
<evidence type="ECO:0000255" key="3">
    <source>
        <dbReference type="PROSITE-ProRule" id="PRU01091"/>
    </source>
</evidence>
<evidence type="ECO:0000305" key="4"/>
<keyword id="KW-0010">Activator</keyword>
<keyword id="KW-0963">Cytoplasm</keyword>
<keyword id="KW-0238">DNA-binding</keyword>
<keyword id="KW-0597">Phosphoprotein</keyword>
<keyword id="KW-0804">Transcription</keyword>
<keyword id="KW-0805">Transcription regulation</keyword>
<keyword id="KW-0902">Two-component regulatory system</keyword>
<name>QSEB_SALTI</name>
<feature type="chain" id="PRO_0000081029" description="Transcriptional regulatory protein QseB">
    <location>
        <begin position="1"/>
        <end position="219"/>
    </location>
</feature>
<feature type="domain" description="Response regulatory" evidence="2">
    <location>
        <begin position="2"/>
        <end position="116"/>
    </location>
</feature>
<feature type="DNA-binding region" description="OmpR/PhoB-type" evidence="3">
    <location>
        <begin position="124"/>
        <end position="218"/>
    </location>
</feature>
<feature type="modified residue" description="4-aspartylphosphate" evidence="2">
    <location>
        <position position="51"/>
    </location>
</feature>
<organism>
    <name type="scientific">Salmonella typhi</name>
    <dbReference type="NCBI Taxonomy" id="90370"/>
    <lineage>
        <taxon>Bacteria</taxon>
        <taxon>Pseudomonadati</taxon>
        <taxon>Pseudomonadota</taxon>
        <taxon>Gammaproteobacteria</taxon>
        <taxon>Enterobacterales</taxon>
        <taxon>Enterobacteriaceae</taxon>
        <taxon>Salmonella</taxon>
    </lineage>
</organism>
<accession>P66796</accession>
<accession>Q8XEQ3</accession>
<protein>
    <recommendedName>
        <fullName>Transcriptional regulatory protein QseB</fullName>
    </recommendedName>
</protein>
<sequence length="219" mass="24274">MRILLVEDDTLIGDGIKAGLSKMGFSVDWFTEGRPGKEALYSAPYDAVILDLTLPGMDGRDILREWREKGKQEPVLILTARDALAERVEGLRLGADDYLCKPFALIEVAARLEALVRRASGQASSELRHGQVTLNPGNLVATLAGEPLALKPKEFALLELLLRNKGRVLPRKLIEEKLYNWDDDVSSNAVEVHVHHLRRKLGSEFIRTVHGIGYTLGDA</sequence>